<dbReference type="EC" id="1.97.1.12" evidence="1"/>
<dbReference type="EMBL" id="AF166114">
    <property type="protein sequence ID" value="AAF43833.1"/>
    <property type="molecule type" value="Genomic_DNA"/>
</dbReference>
<dbReference type="RefSeq" id="NP_038392.1">
    <property type="nucleotide sequence ID" value="NC_002186.1"/>
</dbReference>
<dbReference type="SMR" id="Q9MUR8"/>
<dbReference type="GeneID" id="800944"/>
<dbReference type="GO" id="GO:0009535">
    <property type="term" value="C:chloroplast thylakoid membrane"/>
    <property type="evidence" value="ECO:0007669"/>
    <property type="project" value="UniProtKB-SubCell"/>
</dbReference>
<dbReference type="GO" id="GO:0009522">
    <property type="term" value="C:photosystem I"/>
    <property type="evidence" value="ECO:0007669"/>
    <property type="project" value="UniProtKB-KW"/>
</dbReference>
<dbReference type="GO" id="GO:0051539">
    <property type="term" value="F:4 iron, 4 sulfur cluster binding"/>
    <property type="evidence" value="ECO:0007669"/>
    <property type="project" value="UniProtKB-KW"/>
</dbReference>
<dbReference type="GO" id="GO:0016168">
    <property type="term" value="F:chlorophyll binding"/>
    <property type="evidence" value="ECO:0007669"/>
    <property type="project" value="UniProtKB-KW"/>
</dbReference>
<dbReference type="GO" id="GO:0009055">
    <property type="term" value="F:electron transfer activity"/>
    <property type="evidence" value="ECO:0007669"/>
    <property type="project" value="UniProtKB-UniRule"/>
</dbReference>
<dbReference type="GO" id="GO:0000287">
    <property type="term" value="F:magnesium ion binding"/>
    <property type="evidence" value="ECO:0007669"/>
    <property type="project" value="UniProtKB-UniRule"/>
</dbReference>
<dbReference type="GO" id="GO:0016491">
    <property type="term" value="F:oxidoreductase activity"/>
    <property type="evidence" value="ECO:0007669"/>
    <property type="project" value="UniProtKB-KW"/>
</dbReference>
<dbReference type="GO" id="GO:0015979">
    <property type="term" value="P:photosynthesis"/>
    <property type="evidence" value="ECO:0007669"/>
    <property type="project" value="UniProtKB-UniRule"/>
</dbReference>
<dbReference type="FunFam" id="1.20.1130.10:FF:000001">
    <property type="entry name" value="Photosystem I P700 chlorophyll a apoprotein A2"/>
    <property type="match status" value="1"/>
</dbReference>
<dbReference type="Gene3D" id="1.20.1130.10">
    <property type="entry name" value="Photosystem I PsaA/PsaB"/>
    <property type="match status" value="1"/>
</dbReference>
<dbReference type="HAMAP" id="MF_00458">
    <property type="entry name" value="PSI_PsaA"/>
    <property type="match status" value="1"/>
</dbReference>
<dbReference type="InterPro" id="IPR006243">
    <property type="entry name" value="PSI_PsaA"/>
</dbReference>
<dbReference type="InterPro" id="IPR001280">
    <property type="entry name" value="PSI_PsaA/B"/>
</dbReference>
<dbReference type="InterPro" id="IPR020586">
    <property type="entry name" value="PSI_PsaA/B_CS"/>
</dbReference>
<dbReference type="InterPro" id="IPR036408">
    <property type="entry name" value="PSI_PsaA/B_sf"/>
</dbReference>
<dbReference type="NCBIfam" id="TIGR01335">
    <property type="entry name" value="psaA"/>
    <property type="match status" value="1"/>
</dbReference>
<dbReference type="PANTHER" id="PTHR30128">
    <property type="entry name" value="OUTER MEMBRANE PROTEIN, OMPA-RELATED"/>
    <property type="match status" value="1"/>
</dbReference>
<dbReference type="PANTHER" id="PTHR30128:SF19">
    <property type="entry name" value="PHOTOSYSTEM I P700 CHLOROPHYLL A APOPROTEIN A1-RELATED"/>
    <property type="match status" value="1"/>
</dbReference>
<dbReference type="Pfam" id="PF00223">
    <property type="entry name" value="PsaA_PsaB"/>
    <property type="match status" value="1"/>
</dbReference>
<dbReference type="PIRSF" id="PIRSF002905">
    <property type="entry name" value="PSI_A"/>
    <property type="match status" value="1"/>
</dbReference>
<dbReference type="PRINTS" id="PR00257">
    <property type="entry name" value="PHOTSYSPSAAB"/>
</dbReference>
<dbReference type="SUPFAM" id="SSF81558">
    <property type="entry name" value="Photosystem I subunits PsaA/PsaB"/>
    <property type="match status" value="1"/>
</dbReference>
<dbReference type="PROSITE" id="PS00419">
    <property type="entry name" value="PHOTOSYSTEM_I_PSAAB"/>
    <property type="match status" value="1"/>
</dbReference>
<reference key="1">
    <citation type="journal article" date="2000" name="Nature">
        <title>Ancestral chloroplast genome in Mesostigma viride reveals an early branch of green plant evolution.</title>
        <authorList>
            <person name="Lemieux C."/>
            <person name="Otis C."/>
            <person name="Turmel M."/>
        </authorList>
    </citation>
    <scope>NUCLEOTIDE SEQUENCE [LARGE SCALE GENOMIC DNA]</scope>
    <source>
        <strain>NIES-296 / KY-14 / CCMP 2046</strain>
    </source>
</reference>
<accession>Q9MUR8</accession>
<evidence type="ECO:0000255" key="1">
    <source>
        <dbReference type="HAMAP-Rule" id="MF_00458"/>
    </source>
</evidence>
<comment type="function">
    <text>PsaA and PsaB bind P700, the primary electron donor of photosystem I (PSI), as well as the electron acceptors A0, A1 and FX. PSI is a plastocyanin-ferredoxin oxidoreductase, converting photonic excitation into a charge separation, which transfers an electron from the donor P700 chlorophyll pair to the spectroscopically characterized acceptors A0, A1, FX, FA and FB in turn. Oxidized P700 is reduced on the lumenal side of the thylakoid membrane by plastocyanin.</text>
</comment>
<comment type="catalytic activity">
    <reaction evidence="1">
        <text>reduced [plastocyanin] + hnu + oxidized [2Fe-2S]-[ferredoxin] = oxidized [plastocyanin] + reduced [2Fe-2S]-[ferredoxin]</text>
        <dbReference type="Rhea" id="RHEA:30407"/>
        <dbReference type="Rhea" id="RHEA-COMP:10000"/>
        <dbReference type="Rhea" id="RHEA-COMP:10001"/>
        <dbReference type="Rhea" id="RHEA-COMP:10039"/>
        <dbReference type="Rhea" id="RHEA-COMP:10040"/>
        <dbReference type="ChEBI" id="CHEBI:29036"/>
        <dbReference type="ChEBI" id="CHEBI:30212"/>
        <dbReference type="ChEBI" id="CHEBI:33737"/>
        <dbReference type="ChEBI" id="CHEBI:33738"/>
        <dbReference type="ChEBI" id="CHEBI:49552"/>
        <dbReference type="EC" id="1.97.1.12"/>
    </reaction>
</comment>
<comment type="cofactor">
    <text evidence="1">P700 is a chlorophyll a/chlorophyll a' dimer, A0 is one or more chlorophyll a, A1 is one or both phylloquinones and FX is a shared 4Fe-4S iron-sulfur center.</text>
</comment>
<comment type="subunit">
    <text evidence="1">The PsaA/B heterodimer binds the P700 chlorophyll special pair and subsequent electron acceptors. PSI consists of a core antenna complex that captures photons, and an electron transfer chain that converts photonic excitation into a charge separation. The eukaryotic PSI reaction center is composed of at least 11 subunits.</text>
</comment>
<comment type="subcellular location">
    <subcellularLocation>
        <location evidence="1">Plastid</location>
        <location evidence="1">Chloroplast thylakoid membrane</location>
        <topology evidence="1">Multi-pass membrane protein</topology>
    </subcellularLocation>
</comment>
<comment type="similarity">
    <text evidence="1">Belongs to the PsaA/PsaB family.</text>
</comment>
<keyword id="KW-0004">4Fe-4S</keyword>
<keyword id="KW-0148">Chlorophyll</keyword>
<keyword id="KW-0150">Chloroplast</keyword>
<keyword id="KW-0157">Chromophore</keyword>
<keyword id="KW-0249">Electron transport</keyword>
<keyword id="KW-0408">Iron</keyword>
<keyword id="KW-0411">Iron-sulfur</keyword>
<keyword id="KW-0460">Magnesium</keyword>
<keyword id="KW-0472">Membrane</keyword>
<keyword id="KW-0479">Metal-binding</keyword>
<keyword id="KW-0560">Oxidoreductase</keyword>
<keyword id="KW-0602">Photosynthesis</keyword>
<keyword id="KW-0603">Photosystem I</keyword>
<keyword id="KW-0934">Plastid</keyword>
<keyword id="KW-0793">Thylakoid</keyword>
<keyword id="KW-0812">Transmembrane</keyword>
<keyword id="KW-1133">Transmembrane helix</keyword>
<keyword id="KW-0813">Transport</keyword>
<sequence>MTISPPEREANGKIVVDRDPVKTSFERWGKPGHFSRSLAKGPNTTTWIWNLHADAHDFDSHTNDLEDISRKVFSAHFGQLAVIFIWLSGMYFHGARFSNYEAWLSDPTHIKPSAQVVWPIVGQEILNGDVGGGFQGVQITSGFFQLWRASGIVNEQQLYTTAIGGLIAAGLMFFAGWFHYHKAAPKLEWFQNAESMMNHHLAGLLGLGSLSWAGHQIHVSLPVNQLLDAGVDPKEIPLPHEFVMNRELMAQLYPSFAKGLAPFFTLNWGEYSDFLTFRGGLNPVTGGLWLTDTVHHHVAIAVLFIVAGHMYRTNWGIGHSMKEILEAHKGPFTGEGHKGLYEILTTSWHAQLGLNLALMGSLSIIVAHHMYAMPPYPYLATDYGTQLSLFTHHMWIGGFCIVGGAAHAAIFMVRDYDPTNNYNNLLDRVIRHRDAIISHLNWVCIFLGFHSFGLYIHNDTMSALGRPQDMFSDTAIQLQPVFAQFVQNRNYLAPGFSAPNALASSSAVWGGDVVAVGGKVAMMPIQLGTSDFLVHHIHAFTIHVTVLILLKGVLFARSSRLIPDKANLGFRFPCDGPGRGGTCQVSAWDHVFLGLFWMYNCLSIVIFHFSWKMQSDVWGSVTAQGVSHITGGNFAQSANTINGWLRDFLWAQASQVIQSYGSALSAYGLMFLGAHFVWAFSLMFLFSGRGYWQELIESIVWAHNKLKVAPAIQPRALSITQGRAVGVAHYLLGGIATTWAFFLARIIAVG</sequence>
<gene>
    <name evidence="1" type="primary">psaA</name>
</gene>
<proteinExistence type="inferred from homology"/>
<protein>
    <recommendedName>
        <fullName evidence="1">Photosystem I P700 chlorophyll a apoprotein A1</fullName>
        <ecNumber evidence="1">1.97.1.12</ecNumber>
    </recommendedName>
    <alternativeName>
        <fullName evidence="1">PSI-A</fullName>
    </alternativeName>
    <alternativeName>
        <fullName evidence="1">PsaA</fullName>
    </alternativeName>
</protein>
<geneLocation type="chloroplast"/>
<name>PSAA_MESVI</name>
<organism>
    <name type="scientific">Mesostigma viride</name>
    <name type="common">Green alga</name>
    <dbReference type="NCBI Taxonomy" id="41882"/>
    <lineage>
        <taxon>Eukaryota</taxon>
        <taxon>Viridiplantae</taxon>
        <taxon>Streptophyta</taxon>
        <taxon>Mesostigmatophyceae</taxon>
        <taxon>Mesostigmatales</taxon>
        <taxon>Mesostigmataceae</taxon>
        <taxon>Mesostigma</taxon>
    </lineage>
</organism>
<feature type="chain" id="PRO_0000088560" description="Photosystem I P700 chlorophyll a apoprotein A1">
    <location>
        <begin position="1"/>
        <end position="750"/>
    </location>
</feature>
<feature type="transmembrane region" description="Helical; Name=I" evidence="1">
    <location>
        <begin position="72"/>
        <end position="95"/>
    </location>
</feature>
<feature type="transmembrane region" description="Helical; Name=II" evidence="1">
    <location>
        <begin position="158"/>
        <end position="181"/>
    </location>
</feature>
<feature type="transmembrane region" description="Helical; Name=III" evidence="1">
    <location>
        <begin position="197"/>
        <end position="221"/>
    </location>
</feature>
<feature type="transmembrane region" description="Helical; Name=IV" evidence="1">
    <location>
        <begin position="293"/>
        <end position="311"/>
    </location>
</feature>
<feature type="transmembrane region" description="Helical; Name=V" evidence="1">
    <location>
        <begin position="348"/>
        <end position="371"/>
    </location>
</feature>
<feature type="transmembrane region" description="Helical; Name=VI" evidence="1">
    <location>
        <begin position="387"/>
        <end position="413"/>
    </location>
</feature>
<feature type="transmembrane region" description="Helical; Name=VII" evidence="1">
    <location>
        <begin position="435"/>
        <end position="457"/>
    </location>
</feature>
<feature type="transmembrane region" description="Helical; Name=VIII" evidence="1">
    <location>
        <begin position="532"/>
        <end position="550"/>
    </location>
</feature>
<feature type="transmembrane region" description="Helical; Name=IX" evidence="1">
    <location>
        <begin position="590"/>
        <end position="611"/>
    </location>
</feature>
<feature type="transmembrane region" description="Helical; Name=X" evidence="1">
    <location>
        <begin position="664"/>
        <end position="686"/>
    </location>
</feature>
<feature type="transmembrane region" description="Helical; Name=XI" evidence="1">
    <location>
        <begin position="724"/>
        <end position="744"/>
    </location>
</feature>
<feature type="binding site" evidence="1">
    <location>
        <position position="574"/>
    </location>
    <ligand>
        <name>[4Fe-4S] cluster</name>
        <dbReference type="ChEBI" id="CHEBI:49883"/>
        <note>ligand shared between dimeric partners</note>
    </ligand>
</feature>
<feature type="binding site" evidence="1">
    <location>
        <position position="583"/>
    </location>
    <ligand>
        <name>[4Fe-4S] cluster</name>
        <dbReference type="ChEBI" id="CHEBI:49883"/>
        <note>ligand shared between dimeric partners</note>
    </ligand>
</feature>
<feature type="binding site" description="axial binding residue" evidence="1">
    <location>
        <position position="675"/>
    </location>
    <ligand>
        <name>chlorophyll a'</name>
        <dbReference type="ChEBI" id="CHEBI:189419"/>
        <label>A1</label>
    </ligand>
    <ligandPart>
        <name>Mg</name>
        <dbReference type="ChEBI" id="CHEBI:25107"/>
    </ligandPart>
</feature>
<feature type="binding site" description="axial binding residue" evidence="1">
    <location>
        <position position="683"/>
    </location>
    <ligand>
        <name>chlorophyll a</name>
        <dbReference type="ChEBI" id="CHEBI:58416"/>
        <label>A3</label>
    </ligand>
    <ligandPart>
        <name>Mg</name>
        <dbReference type="ChEBI" id="CHEBI:25107"/>
    </ligandPart>
</feature>
<feature type="binding site" evidence="1">
    <location>
        <position position="691"/>
    </location>
    <ligand>
        <name>chlorophyll a</name>
        <dbReference type="ChEBI" id="CHEBI:58416"/>
        <label>A3</label>
    </ligand>
</feature>
<feature type="binding site" evidence="1">
    <location>
        <position position="692"/>
    </location>
    <ligand>
        <name>phylloquinone</name>
        <dbReference type="ChEBI" id="CHEBI:18067"/>
        <label>A</label>
    </ligand>
</feature>